<protein>
    <recommendedName>
        <fullName evidence="1">Bifunctional protein FolD</fullName>
    </recommendedName>
    <domain>
        <recommendedName>
            <fullName evidence="1">Methylenetetrahydrofolate dehydrogenase</fullName>
            <ecNumber evidence="1">1.5.1.5</ecNumber>
        </recommendedName>
    </domain>
    <domain>
        <recommendedName>
            <fullName evidence="1">Methenyltetrahydrofolate cyclohydrolase</fullName>
            <ecNumber evidence="1">3.5.4.9</ecNumber>
        </recommendedName>
    </domain>
</protein>
<gene>
    <name evidence="1" type="primary">folD</name>
    <name type="ordered locus">Ddes_2215</name>
</gene>
<comment type="function">
    <text evidence="1">Catalyzes the oxidation of 5,10-methylenetetrahydrofolate to 5,10-methenyltetrahydrofolate and then the hydrolysis of 5,10-methenyltetrahydrofolate to 10-formyltetrahydrofolate.</text>
</comment>
<comment type="catalytic activity">
    <reaction evidence="1">
        <text>(6R)-5,10-methylene-5,6,7,8-tetrahydrofolate + NADP(+) = (6R)-5,10-methenyltetrahydrofolate + NADPH</text>
        <dbReference type="Rhea" id="RHEA:22812"/>
        <dbReference type="ChEBI" id="CHEBI:15636"/>
        <dbReference type="ChEBI" id="CHEBI:57455"/>
        <dbReference type="ChEBI" id="CHEBI:57783"/>
        <dbReference type="ChEBI" id="CHEBI:58349"/>
        <dbReference type="EC" id="1.5.1.5"/>
    </reaction>
</comment>
<comment type="catalytic activity">
    <reaction evidence="1">
        <text>(6R)-5,10-methenyltetrahydrofolate + H2O = (6R)-10-formyltetrahydrofolate + H(+)</text>
        <dbReference type="Rhea" id="RHEA:23700"/>
        <dbReference type="ChEBI" id="CHEBI:15377"/>
        <dbReference type="ChEBI" id="CHEBI:15378"/>
        <dbReference type="ChEBI" id="CHEBI:57455"/>
        <dbReference type="ChEBI" id="CHEBI:195366"/>
        <dbReference type="EC" id="3.5.4.9"/>
    </reaction>
</comment>
<comment type="pathway">
    <text evidence="1">One-carbon metabolism; tetrahydrofolate interconversion.</text>
</comment>
<comment type="subunit">
    <text evidence="1">Homodimer.</text>
</comment>
<comment type="similarity">
    <text evidence="1">Belongs to the tetrahydrofolate dehydrogenase/cyclohydrolase family.</text>
</comment>
<name>FOLD_DESDA</name>
<feature type="chain" id="PRO_1000185609" description="Bifunctional protein FolD">
    <location>
        <begin position="1"/>
        <end position="285"/>
    </location>
</feature>
<feature type="binding site" evidence="1">
    <location>
        <begin position="164"/>
        <end position="166"/>
    </location>
    <ligand>
        <name>NADP(+)</name>
        <dbReference type="ChEBI" id="CHEBI:58349"/>
    </ligand>
</feature>
<feature type="binding site" evidence="1">
    <location>
        <position position="193"/>
    </location>
    <ligand>
        <name>NADP(+)</name>
        <dbReference type="ChEBI" id="CHEBI:58349"/>
    </ligand>
</feature>
<feature type="binding site" evidence="1">
    <location>
        <position position="234"/>
    </location>
    <ligand>
        <name>NADP(+)</name>
        <dbReference type="ChEBI" id="CHEBI:58349"/>
    </ligand>
</feature>
<accession>B8J466</accession>
<sequence length="285" mass="30298">MLIIDGKKTAQDIRAELATEVTAATAEGRRAPGLAVILVGEDPASQVYVRNKEKACTEVGITSFAYRLPAETGQQELLDLIAECNARPDVDGILLQLPLPRGLDAQACLLAIDPAKDVDGFHPENVGRLSLGLPGFVSCTPAGVMELLRRYNLPTRGKKAVVVGRSDIVGKPLALLLTRSGEFGDATVTICHSRTPDLAEECRKADFLFLAVGRPRLITGDMVRQGAVVIDVGINRSDDGLCGDADYESVSKKAAAITPVPGGVGPMTIAMLLVNTVQSWRQRTA</sequence>
<evidence type="ECO:0000255" key="1">
    <source>
        <dbReference type="HAMAP-Rule" id="MF_01576"/>
    </source>
</evidence>
<proteinExistence type="inferred from homology"/>
<keyword id="KW-0028">Amino-acid biosynthesis</keyword>
<keyword id="KW-0368">Histidine biosynthesis</keyword>
<keyword id="KW-0378">Hydrolase</keyword>
<keyword id="KW-0486">Methionine biosynthesis</keyword>
<keyword id="KW-0511">Multifunctional enzyme</keyword>
<keyword id="KW-0521">NADP</keyword>
<keyword id="KW-0554">One-carbon metabolism</keyword>
<keyword id="KW-0560">Oxidoreductase</keyword>
<keyword id="KW-0658">Purine biosynthesis</keyword>
<reference key="1">
    <citation type="submission" date="2009-01" db="EMBL/GenBank/DDBJ databases">
        <title>Complete sequence of Desulfovibrio desulfuricans subsp. desulfuricans str. ATCC 27774.</title>
        <authorList>
            <consortium name="US DOE Joint Genome Institute"/>
            <person name="Lucas S."/>
            <person name="Copeland A."/>
            <person name="Lapidus A."/>
            <person name="Glavina del Rio T."/>
            <person name="Tice H."/>
            <person name="Bruce D."/>
            <person name="Goodwin L."/>
            <person name="Pitluck S."/>
            <person name="Sims D."/>
            <person name="Lu M."/>
            <person name="Kiss H."/>
            <person name="Meineke L."/>
            <person name="Brettin T."/>
            <person name="Detter J.C."/>
            <person name="Han C."/>
            <person name="Larimer F."/>
            <person name="Land M."/>
            <person name="Hauser L."/>
            <person name="Kyrpides N."/>
            <person name="Ovchinnikova G."/>
            <person name="Hazen T.C."/>
        </authorList>
    </citation>
    <scope>NUCLEOTIDE SEQUENCE [LARGE SCALE GENOMIC DNA]</scope>
    <source>
        <strain>ATCC 27774 / DSM 6949 / MB</strain>
    </source>
</reference>
<dbReference type="EC" id="1.5.1.5" evidence="1"/>
<dbReference type="EC" id="3.5.4.9" evidence="1"/>
<dbReference type="EMBL" id="CP001358">
    <property type="protein sequence ID" value="ACL50111.1"/>
    <property type="molecule type" value="Genomic_DNA"/>
</dbReference>
<dbReference type="SMR" id="B8J466"/>
<dbReference type="STRING" id="525146.Ddes_2215"/>
<dbReference type="KEGG" id="dds:Ddes_2215"/>
<dbReference type="eggNOG" id="COG0190">
    <property type="taxonomic scope" value="Bacteria"/>
</dbReference>
<dbReference type="HOGENOM" id="CLU_034045_2_1_7"/>
<dbReference type="UniPathway" id="UPA00193"/>
<dbReference type="GO" id="GO:0005829">
    <property type="term" value="C:cytosol"/>
    <property type="evidence" value="ECO:0007669"/>
    <property type="project" value="TreeGrafter"/>
</dbReference>
<dbReference type="GO" id="GO:0004477">
    <property type="term" value="F:methenyltetrahydrofolate cyclohydrolase activity"/>
    <property type="evidence" value="ECO:0007669"/>
    <property type="project" value="UniProtKB-UniRule"/>
</dbReference>
<dbReference type="GO" id="GO:0004488">
    <property type="term" value="F:methylenetetrahydrofolate dehydrogenase (NADP+) activity"/>
    <property type="evidence" value="ECO:0007669"/>
    <property type="project" value="UniProtKB-UniRule"/>
</dbReference>
<dbReference type="GO" id="GO:0000105">
    <property type="term" value="P:L-histidine biosynthetic process"/>
    <property type="evidence" value="ECO:0007669"/>
    <property type="project" value="UniProtKB-KW"/>
</dbReference>
<dbReference type="GO" id="GO:0009086">
    <property type="term" value="P:methionine biosynthetic process"/>
    <property type="evidence" value="ECO:0007669"/>
    <property type="project" value="UniProtKB-KW"/>
</dbReference>
<dbReference type="GO" id="GO:0006164">
    <property type="term" value="P:purine nucleotide biosynthetic process"/>
    <property type="evidence" value="ECO:0007669"/>
    <property type="project" value="UniProtKB-KW"/>
</dbReference>
<dbReference type="GO" id="GO:0035999">
    <property type="term" value="P:tetrahydrofolate interconversion"/>
    <property type="evidence" value="ECO:0007669"/>
    <property type="project" value="UniProtKB-UniRule"/>
</dbReference>
<dbReference type="CDD" id="cd01080">
    <property type="entry name" value="NAD_bind_m-THF_DH_Cyclohyd"/>
    <property type="match status" value="1"/>
</dbReference>
<dbReference type="FunFam" id="3.40.50.720:FF:000189">
    <property type="entry name" value="Bifunctional protein FolD"/>
    <property type="match status" value="1"/>
</dbReference>
<dbReference type="FunFam" id="3.40.50.10860:FF:000005">
    <property type="entry name" value="C-1-tetrahydrofolate synthase, cytoplasmic, putative"/>
    <property type="match status" value="1"/>
</dbReference>
<dbReference type="Gene3D" id="3.40.50.10860">
    <property type="entry name" value="Leucine Dehydrogenase, chain A, domain 1"/>
    <property type="match status" value="1"/>
</dbReference>
<dbReference type="Gene3D" id="3.40.50.720">
    <property type="entry name" value="NAD(P)-binding Rossmann-like Domain"/>
    <property type="match status" value="1"/>
</dbReference>
<dbReference type="HAMAP" id="MF_01576">
    <property type="entry name" value="THF_DHG_CYH"/>
    <property type="match status" value="1"/>
</dbReference>
<dbReference type="InterPro" id="IPR046346">
    <property type="entry name" value="Aminoacid_DH-like_N_sf"/>
</dbReference>
<dbReference type="InterPro" id="IPR036291">
    <property type="entry name" value="NAD(P)-bd_dom_sf"/>
</dbReference>
<dbReference type="InterPro" id="IPR000672">
    <property type="entry name" value="THF_DH/CycHdrlase"/>
</dbReference>
<dbReference type="InterPro" id="IPR020630">
    <property type="entry name" value="THF_DH/CycHdrlase_cat_dom"/>
</dbReference>
<dbReference type="InterPro" id="IPR020867">
    <property type="entry name" value="THF_DH/CycHdrlase_CS"/>
</dbReference>
<dbReference type="InterPro" id="IPR020631">
    <property type="entry name" value="THF_DH/CycHdrlase_NAD-bd_dom"/>
</dbReference>
<dbReference type="NCBIfam" id="NF008058">
    <property type="entry name" value="PRK10792.1"/>
    <property type="match status" value="1"/>
</dbReference>
<dbReference type="NCBIfam" id="NF010781">
    <property type="entry name" value="PRK14184.1"/>
    <property type="match status" value="1"/>
</dbReference>
<dbReference type="NCBIfam" id="NF010783">
    <property type="entry name" value="PRK14186.1"/>
    <property type="match status" value="1"/>
</dbReference>
<dbReference type="PANTHER" id="PTHR48099:SF5">
    <property type="entry name" value="C-1-TETRAHYDROFOLATE SYNTHASE, CYTOPLASMIC"/>
    <property type="match status" value="1"/>
</dbReference>
<dbReference type="PANTHER" id="PTHR48099">
    <property type="entry name" value="C-1-TETRAHYDROFOLATE SYNTHASE, CYTOPLASMIC-RELATED"/>
    <property type="match status" value="1"/>
</dbReference>
<dbReference type="Pfam" id="PF00763">
    <property type="entry name" value="THF_DHG_CYH"/>
    <property type="match status" value="1"/>
</dbReference>
<dbReference type="Pfam" id="PF02882">
    <property type="entry name" value="THF_DHG_CYH_C"/>
    <property type="match status" value="1"/>
</dbReference>
<dbReference type="PRINTS" id="PR00085">
    <property type="entry name" value="THFDHDRGNASE"/>
</dbReference>
<dbReference type="SUPFAM" id="SSF53223">
    <property type="entry name" value="Aminoacid dehydrogenase-like, N-terminal domain"/>
    <property type="match status" value="1"/>
</dbReference>
<dbReference type="SUPFAM" id="SSF51735">
    <property type="entry name" value="NAD(P)-binding Rossmann-fold domains"/>
    <property type="match status" value="1"/>
</dbReference>
<dbReference type="PROSITE" id="PS00767">
    <property type="entry name" value="THF_DHG_CYH_2"/>
    <property type="match status" value="1"/>
</dbReference>
<organism>
    <name type="scientific">Desulfovibrio desulfuricans (strain ATCC 27774 / DSM 6949 / MB)</name>
    <dbReference type="NCBI Taxonomy" id="525146"/>
    <lineage>
        <taxon>Bacteria</taxon>
        <taxon>Pseudomonadati</taxon>
        <taxon>Thermodesulfobacteriota</taxon>
        <taxon>Desulfovibrionia</taxon>
        <taxon>Desulfovibrionales</taxon>
        <taxon>Desulfovibrionaceae</taxon>
        <taxon>Desulfovibrio</taxon>
    </lineage>
</organism>